<name>PRIC_CROS8</name>
<dbReference type="EMBL" id="CP000783">
    <property type="protein sequence ID" value="ABU78033.1"/>
    <property type="molecule type" value="Genomic_DNA"/>
</dbReference>
<dbReference type="PDB" id="2NCJ">
    <property type="method" value="NMR"/>
    <property type="chains" value="A=1-171"/>
</dbReference>
<dbReference type="PDBsum" id="2NCJ"/>
<dbReference type="BMRB" id="A7MJV9"/>
<dbReference type="SMR" id="A7MJV9"/>
<dbReference type="KEGG" id="esa:ESA_02803"/>
<dbReference type="PATRIC" id="fig|290339.8.peg.2496"/>
<dbReference type="HOGENOM" id="CLU_103284_1_0_6"/>
<dbReference type="Proteomes" id="UP000000260">
    <property type="component" value="Chromosome"/>
</dbReference>
<dbReference type="Gene3D" id="1.20.1270.340">
    <property type="match status" value="1"/>
</dbReference>
<dbReference type="InterPro" id="IPR038338">
    <property type="entry name" value="PriB/PriC_sf"/>
</dbReference>
<dbReference type="InterPro" id="IPR010890">
    <property type="entry name" value="Primosomal_replicat_PriB/PriC"/>
</dbReference>
<dbReference type="Pfam" id="PF07445">
    <property type="entry name" value="PriC"/>
    <property type="match status" value="1"/>
</dbReference>
<feature type="chain" id="PRO_0000462253" description="Replication restart protein PriC">
    <location>
        <begin position="1"/>
        <end position="171"/>
    </location>
</feature>
<proteinExistence type="evidence at protein level"/>
<protein>
    <recommendedName>
        <fullName evidence="4">Replication restart protein PriC</fullName>
    </recommendedName>
</protein>
<accession>A7MJV9</accession>
<keyword id="KW-0002">3D-structure</keyword>
<keyword id="KW-0235">DNA replication</keyword>
<keyword id="KW-0238">DNA-binding</keyword>
<keyword id="KW-0639">Primosome</keyword>
<keyword id="KW-1185">Reference proteome</keyword>
<gene>
    <name evidence="3" type="primary">priC</name>
    <name evidence="5" type="ordered locus">ESA_02803</name>
</gene>
<reference evidence="5" key="1">
    <citation type="journal article" date="2010" name="PLoS ONE">
        <title>Genome sequence of Cronobacter sakazakii BAA-894 and comparative genomic hybridization analysis with other Cronobacter species.</title>
        <authorList>
            <person name="Kucerova E."/>
            <person name="Clifton S.W."/>
            <person name="Xia X.Q."/>
            <person name="Long F."/>
            <person name="Porwollik S."/>
            <person name="Fulton L."/>
            <person name="Fronick C."/>
            <person name="Minx P."/>
            <person name="Kyung K."/>
            <person name="Warren W."/>
            <person name="Fulton R."/>
            <person name="Feng D."/>
            <person name="Wollam A."/>
            <person name="Shah N."/>
            <person name="Bhonagiri V."/>
            <person name="Nash W.E."/>
            <person name="Hallsworth-Pepin K."/>
            <person name="Wilson R.K."/>
            <person name="McClelland M."/>
            <person name="Forsythe S.J."/>
        </authorList>
    </citation>
    <scope>NUCLEOTIDE SEQUENCE [LARGE SCALE GENOMIC DNA]</scope>
    <source>
        <strain>ATCC BAA-894</strain>
    </source>
</reference>
<reference evidence="6" key="2">
    <citation type="journal article" date="2016" name="J. Biol. Chem.">
        <title>Structure and Function of the PriC DNA Replication Restart Protein.</title>
        <authorList>
            <person name="Wessel S.R."/>
            <person name="Cornilescu C.C."/>
            <person name="Cornilescu G."/>
            <person name="Metz A."/>
            <person name="Leroux M."/>
            <person name="Hu K."/>
            <person name="Sandler S.J."/>
            <person name="Markley J.L."/>
            <person name="Keck J.L."/>
        </authorList>
    </citation>
    <scope>STRUCTURE BY NMR</scope>
    <scope>FUNCTION</scope>
    <scope>SUBUNIT</scope>
    <scope>INTERACTION WITH SSB</scope>
    <scope>DOMAIN</scope>
    <scope>DNA-BINDING</scope>
    <source>
        <strain>ATCC BAA-894</strain>
    </source>
</reference>
<organism>
    <name type="scientific">Cronobacter sakazakii (strain ATCC BAA-894)</name>
    <name type="common">Enterobacter sakazakii</name>
    <dbReference type="NCBI Taxonomy" id="290339"/>
    <lineage>
        <taxon>Bacteria</taxon>
        <taxon>Pseudomonadati</taxon>
        <taxon>Pseudomonadota</taxon>
        <taxon>Gammaproteobacteria</taxon>
        <taxon>Enterobacterales</taxon>
        <taxon>Enterobacteriaceae</taxon>
        <taxon>Cronobacter</taxon>
    </lineage>
</organism>
<sequence>MRTPLLLQSLKTRVAALHTLIGPLASQRHFSPRFDRQLFACRGARLGDYLTEAEESLTHLEAAVNQGDATRVAWLAERLAAQIEALQREAATATLRRHENAHLPGGRLHARLAEYQEYERRLLAMKNEREQRYAERHDPQLAREITALDERLTRCRTAIARTERALERITR</sequence>
<evidence type="ECO:0000250" key="1">
    <source>
        <dbReference type="UniProtKB" id="P23862"/>
    </source>
</evidence>
<evidence type="ECO:0000269" key="2">
    <source>
    </source>
</evidence>
<evidence type="ECO:0000303" key="3">
    <source>
    </source>
</evidence>
<evidence type="ECO:0000305" key="4"/>
<evidence type="ECO:0000312" key="5">
    <source>
        <dbReference type="EMBL" id="ABU78033.1"/>
    </source>
</evidence>
<evidence type="ECO:0007744" key="6">
    <source>
        <dbReference type="PDB" id="2NCJ"/>
    </source>
</evidence>
<comment type="function">
    <text evidence="2">Involved in the restart of stalled replication forks, which reloads the DnaB replicative helicase on sites other than the origin of replication (Probable). In vitro can load (E.coli) DnaB replicative helicase from a DnaB-DnaC complex on a single-stranded DNA (ssDNA)-binding protein (SSB)-coated stalled replication fork with no leading- or lagging-strand in the absence of other primosome proteins (PriA, PriB or DnaT) (PubMed:27382050). Binds SSB (tested with E.coli protein) and ssDNA. Complements priC in an E.coli priB-priC double deletion (PubMed:27382050).</text>
</comment>
<comment type="subunit">
    <text evidence="1 2">Monomer (PubMed:27382050). Component of the replication restart primosome, which is composed of PriA, PriB, PriC, DnaBe and DnaT; DnaG primase associates transiently with this complex (By similarity). Interacts with the C-terminus of SSB (PubMed:27382050). SSB interaction is required to load the main replicative helicase onto substrate replication forks (By similarity). Interacts with helicase DnaB alone and in the DnaB-DnaC complex, probably 1:1 binding with DnaB (By similarity).</text>
</comment>
<comment type="domain">
    <text evidence="2">Known ssDNA- and SSB binding sites are adjacent in the 5-helix bundle protein.</text>
</comment>
<comment type="similarity">
    <text evidence="4">Belongs to the PriC family.</text>
</comment>